<accession>P0CP57</accession>
<accession>Q55RZ4</accession>
<accession>Q5KGE6</accession>
<feature type="chain" id="PRO_0000410186" description="Putative heme-binding peroxidase">
    <location>
        <begin position="1"/>
        <end position="315"/>
    </location>
</feature>
<feature type="region of interest" description="Disordered" evidence="4">
    <location>
        <begin position="267"/>
        <end position="286"/>
    </location>
</feature>
<feature type="active site" description="Proton acceptor" evidence="2 3">
    <location>
        <position position="40"/>
    </location>
</feature>
<feature type="active site" description="Tryptophan radical intermediate" evidence="1">
    <location>
        <position position="185"/>
    </location>
</feature>
<feature type="binding site" description="axial binding residue" evidence="2">
    <location>
        <position position="169"/>
    </location>
    <ligand>
        <name>heme b</name>
        <dbReference type="ChEBI" id="CHEBI:60344"/>
    </ligand>
    <ligandPart>
        <name>Fe</name>
        <dbReference type="ChEBI" id="CHEBI:18248"/>
    </ligandPart>
</feature>
<feature type="site" description="Transition state stabilizer" evidence="2">
    <location>
        <position position="36"/>
    </location>
</feature>
<evidence type="ECO:0000250" key="1"/>
<evidence type="ECO:0000255" key="2">
    <source>
        <dbReference type="PROSITE-ProRule" id="PRU00297"/>
    </source>
</evidence>
<evidence type="ECO:0000255" key="3">
    <source>
        <dbReference type="PROSITE-ProRule" id="PRU10012"/>
    </source>
</evidence>
<evidence type="ECO:0000256" key="4">
    <source>
        <dbReference type="SAM" id="MobiDB-lite"/>
    </source>
</evidence>
<evidence type="ECO:0000305" key="5"/>
<dbReference type="EC" id="1.11.1.-"/>
<dbReference type="EMBL" id="AAEY01000028">
    <property type="protein sequence ID" value="EAL20467.1"/>
    <property type="status" value="ALT_SEQ"/>
    <property type="molecule type" value="Genomic_DNA"/>
</dbReference>
<dbReference type="RefSeq" id="XP_775114.1">
    <property type="nucleotide sequence ID" value="XM_770021.1"/>
</dbReference>
<dbReference type="SMR" id="P0CP57"/>
<dbReference type="GeneID" id="4936399"/>
<dbReference type="KEGG" id="cnb:CNBE3880"/>
<dbReference type="HOGENOM" id="CLU_036959_0_1_1"/>
<dbReference type="OrthoDB" id="2040at5206"/>
<dbReference type="GO" id="GO:0020037">
    <property type="term" value="F:heme binding"/>
    <property type="evidence" value="ECO:0007669"/>
    <property type="project" value="InterPro"/>
</dbReference>
<dbReference type="GO" id="GO:0046872">
    <property type="term" value="F:metal ion binding"/>
    <property type="evidence" value="ECO:0007669"/>
    <property type="project" value="UniProtKB-KW"/>
</dbReference>
<dbReference type="GO" id="GO:0004601">
    <property type="term" value="F:peroxidase activity"/>
    <property type="evidence" value="ECO:0007669"/>
    <property type="project" value="UniProtKB-KW"/>
</dbReference>
<dbReference type="GO" id="GO:0034599">
    <property type="term" value="P:cellular response to oxidative stress"/>
    <property type="evidence" value="ECO:0007669"/>
    <property type="project" value="InterPro"/>
</dbReference>
<dbReference type="GO" id="GO:0042744">
    <property type="term" value="P:hydrogen peroxide catabolic process"/>
    <property type="evidence" value="ECO:0007669"/>
    <property type="project" value="TreeGrafter"/>
</dbReference>
<dbReference type="GO" id="GO:0000302">
    <property type="term" value="P:response to reactive oxygen species"/>
    <property type="evidence" value="ECO:0007669"/>
    <property type="project" value="TreeGrafter"/>
</dbReference>
<dbReference type="Gene3D" id="1.10.520.10">
    <property type="match status" value="1"/>
</dbReference>
<dbReference type="Gene3D" id="1.10.420.10">
    <property type="entry name" value="Peroxidase, domain 2"/>
    <property type="match status" value="1"/>
</dbReference>
<dbReference type="InterPro" id="IPR044831">
    <property type="entry name" value="Ccp1-like"/>
</dbReference>
<dbReference type="InterPro" id="IPR002016">
    <property type="entry name" value="Haem_peroxidase"/>
</dbReference>
<dbReference type="InterPro" id="IPR010255">
    <property type="entry name" value="Haem_peroxidase_sf"/>
</dbReference>
<dbReference type="InterPro" id="IPR002207">
    <property type="entry name" value="Peroxidase_I"/>
</dbReference>
<dbReference type="InterPro" id="IPR019794">
    <property type="entry name" value="Peroxidases_AS"/>
</dbReference>
<dbReference type="PANTHER" id="PTHR31356:SF36">
    <property type="entry name" value="L-ASCORBATE PEROXIDASE 3"/>
    <property type="match status" value="1"/>
</dbReference>
<dbReference type="PANTHER" id="PTHR31356">
    <property type="entry name" value="THYLAKOID LUMENAL 29 KDA PROTEIN, CHLOROPLASTIC-RELATED"/>
    <property type="match status" value="1"/>
</dbReference>
<dbReference type="Pfam" id="PF00141">
    <property type="entry name" value="peroxidase"/>
    <property type="match status" value="1"/>
</dbReference>
<dbReference type="PRINTS" id="PR00459">
    <property type="entry name" value="ASPEROXIDASE"/>
</dbReference>
<dbReference type="PRINTS" id="PR00458">
    <property type="entry name" value="PEROXIDASE"/>
</dbReference>
<dbReference type="SUPFAM" id="SSF48113">
    <property type="entry name" value="Heme-dependent peroxidases"/>
    <property type="match status" value="1"/>
</dbReference>
<dbReference type="PROSITE" id="PS00436">
    <property type="entry name" value="PEROXIDASE_2"/>
    <property type="match status" value="1"/>
</dbReference>
<dbReference type="PROSITE" id="PS50873">
    <property type="entry name" value="PEROXIDASE_4"/>
    <property type="match status" value="1"/>
</dbReference>
<keyword id="KW-0349">Heme</keyword>
<keyword id="KW-0408">Iron</keyword>
<keyword id="KW-0479">Metal-binding</keyword>
<keyword id="KW-0560">Oxidoreductase</keyword>
<keyword id="KW-0575">Peroxidase</keyword>
<gene>
    <name type="ordered locus">CNBE3880</name>
</gene>
<proteinExistence type="inferred from homology"/>
<organism>
    <name type="scientific">Cryptococcus neoformans var. neoformans serotype D (strain B-3501A)</name>
    <name type="common">Filobasidiella neoformans</name>
    <dbReference type="NCBI Taxonomy" id="283643"/>
    <lineage>
        <taxon>Eukaryota</taxon>
        <taxon>Fungi</taxon>
        <taxon>Dikarya</taxon>
        <taxon>Basidiomycota</taxon>
        <taxon>Agaricomycotina</taxon>
        <taxon>Tremellomycetes</taxon>
        <taxon>Tremellales</taxon>
        <taxon>Cryptococcaceae</taxon>
        <taxon>Cryptococcus</taxon>
        <taxon>Cryptococcus neoformans species complex</taxon>
    </lineage>
</organism>
<name>CCPR2_CRYNB</name>
<sequence>MASVKEGDYQALKEEIKKIMKQPGYDDGSAGPVLVRLAWHASGNFSLVEHNGGSNGAGMRFPPESVDPANAGLHYAISFLLPLQSANSWISHADLWTLAGVTAIEAMGGPQIPWEPGRLDYESEQAAVEHRGDVSNRLPDGALGAAHIRDVFGRMGFSDQEIVALSGAHNLGRCHADRSGFDGPWVVNPTRFSNQYFKLLLPGTRLMMLPTDMALIEDPSFRPWVEKYAADQNLFFKDFANAFGKLIELGVDRDDTGFARLAKKAAEEGKPLDKTAPPAGDETCPVSGAVGGGVQRAAGGGGCPFMAMQNREAKL</sequence>
<reference key="1">
    <citation type="journal article" date="2005" name="Science">
        <title>The genome of the basidiomycetous yeast and human pathogen Cryptococcus neoformans.</title>
        <authorList>
            <person name="Loftus B.J."/>
            <person name="Fung E."/>
            <person name="Roncaglia P."/>
            <person name="Rowley D."/>
            <person name="Amedeo P."/>
            <person name="Bruno D."/>
            <person name="Vamathevan J."/>
            <person name="Miranda M."/>
            <person name="Anderson I.J."/>
            <person name="Fraser J.A."/>
            <person name="Allen J.E."/>
            <person name="Bosdet I.E."/>
            <person name="Brent M.R."/>
            <person name="Chiu R."/>
            <person name="Doering T.L."/>
            <person name="Donlin M.J."/>
            <person name="D'Souza C.A."/>
            <person name="Fox D.S."/>
            <person name="Grinberg V."/>
            <person name="Fu J."/>
            <person name="Fukushima M."/>
            <person name="Haas B.J."/>
            <person name="Huang J.C."/>
            <person name="Janbon G."/>
            <person name="Jones S.J.M."/>
            <person name="Koo H.L."/>
            <person name="Krzywinski M.I."/>
            <person name="Kwon-Chung K.J."/>
            <person name="Lengeler K.B."/>
            <person name="Maiti R."/>
            <person name="Marra M.A."/>
            <person name="Marra R.E."/>
            <person name="Mathewson C.A."/>
            <person name="Mitchell T.G."/>
            <person name="Pertea M."/>
            <person name="Riggs F.R."/>
            <person name="Salzberg S.L."/>
            <person name="Schein J.E."/>
            <person name="Shvartsbeyn A."/>
            <person name="Shin H."/>
            <person name="Shumway M."/>
            <person name="Specht C.A."/>
            <person name="Suh B.B."/>
            <person name="Tenney A."/>
            <person name="Utterback T.R."/>
            <person name="Wickes B.L."/>
            <person name="Wortman J.R."/>
            <person name="Wye N.H."/>
            <person name="Kronstad J.W."/>
            <person name="Lodge J.K."/>
            <person name="Heitman J."/>
            <person name="Davis R.W."/>
            <person name="Fraser C.M."/>
            <person name="Hyman R.W."/>
        </authorList>
    </citation>
    <scope>NUCLEOTIDE SEQUENCE [LARGE SCALE GENOMIC DNA]</scope>
    <source>
        <strain>B-3501A</strain>
    </source>
</reference>
<comment type="function">
    <text evidence="1">Destroys radicals which are normally produced within the cells and which are toxic to biological systems.</text>
</comment>
<comment type="cofactor">
    <cofactor evidence="2">
        <name>heme b</name>
        <dbReference type="ChEBI" id="CHEBI:60344"/>
    </cofactor>
    <text evidence="2">Binds 1 heme b (iron(II)-protoporphyrin IX) group per subunit.</text>
</comment>
<comment type="similarity">
    <text evidence="5">Belongs to the peroxidase family. Cytochrome c peroxidase subfamily.</text>
</comment>
<comment type="sequence caution" evidence="5">
    <conflict type="erroneous gene model prediction">
        <sequence resource="EMBL-CDS" id="EAL20467"/>
    </conflict>
</comment>
<protein>
    <recommendedName>
        <fullName>Putative heme-binding peroxidase</fullName>
        <ecNumber>1.11.1.-</ecNumber>
    </recommendedName>
</protein>